<accession>Q6F6P9</accession>
<proteinExistence type="inferred from homology"/>
<dbReference type="EC" id="2.1.2.9" evidence="1"/>
<dbReference type="EMBL" id="CR543861">
    <property type="protein sequence ID" value="CAG70268.1"/>
    <property type="molecule type" value="Genomic_DNA"/>
</dbReference>
<dbReference type="RefSeq" id="WP_004923054.1">
    <property type="nucleotide sequence ID" value="NC_005966.1"/>
</dbReference>
<dbReference type="SMR" id="Q6F6P9"/>
<dbReference type="STRING" id="202950.GCA_001485005_01589"/>
<dbReference type="GeneID" id="45235797"/>
<dbReference type="KEGG" id="aci:ACIAD3637"/>
<dbReference type="eggNOG" id="COG0223">
    <property type="taxonomic scope" value="Bacteria"/>
</dbReference>
<dbReference type="HOGENOM" id="CLU_033347_1_2_6"/>
<dbReference type="OrthoDB" id="9802815at2"/>
<dbReference type="BioCyc" id="ASP62977:ACIAD_RS16435-MONOMER"/>
<dbReference type="Proteomes" id="UP000000430">
    <property type="component" value="Chromosome"/>
</dbReference>
<dbReference type="GO" id="GO:0005829">
    <property type="term" value="C:cytosol"/>
    <property type="evidence" value="ECO:0007669"/>
    <property type="project" value="TreeGrafter"/>
</dbReference>
<dbReference type="GO" id="GO:0004479">
    <property type="term" value="F:methionyl-tRNA formyltransferase activity"/>
    <property type="evidence" value="ECO:0007669"/>
    <property type="project" value="UniProtKB-UniRule"/>
</dbReference>
<dbReference type="CDD" id="cd08646">
    <property type="entry name" value="FMT_core_Met-tRNA-FMT_N"/>
    <property type="match status" value="1"/>
</dbReference>
<dbReference type="CDD" id="cd08704">
    <property type="entry name" value="Met_tRNA_FMT_C"/>
    <property type="match status" value="1"/>
</dbReference>
<dbReference type="Gene3D" id="3.10.25.10">
    <property type="entry name" value="Formyl transferase, C-terminal domain"/>
    <property type="match status" value="1"/>
</dbReference>
<dbReference type="Gene3D" id="3.40.50.170">
    <property type="entry name" value="Formyl transferase, N-terminal domain"/>
    <property type="match status" value="1"/>
</dbReference>
<dbReference type="HAMAP" id="MF_00182">
    <property type="entry name" value="Formyl_trans"/>
    <property type="match status" value="1"/>
</dbReference>
<dbReference type="InterPro" id="IPR005794">
    <property type="entry name" value="Fmt"/>
</dbReference>
<dbReference type="InterPro" id="IPR005793">
    <property type="entry name" value="Formyl_trans_C"/>
</dbReference>
<dbReference type="InterPro" id="IPR037022">
    <property type="entry name" value="Formyl_trans_C_sf"/>
</dbReference>
<dbReference type="InterPro" id="IPR002376">
    <property type="entry name" value="Formyl_transf_N"/>
</dbReference>
<dbReference type="InterPro" id="IPR036477">
    <property type="entry name" value="Formyl_transf_N_sf"/>
</dbReference>
<dbReference type="InterPro" id="IPR011034">
    <property type="entry name" value="Formyl_transferase-like_C_sf"/>
</dbReference>
<dbReference type="InterPro" id="IPR044135">
    <property type="entry name" value="Met-tRNA-FMT_C"/>
</dbReference>
<dbReference type="InterPro" id="IPR041711">
    <property type="entry name" value="Met-tRNA-FMT_N"/>
</dbReference>
<dbReference type="NCBIfam" id="TIGR00460">
    <property type="entry name" value="fmt"/>
    <property type="match status" value="1"/>
</dbReference>
<dbReference type="PANTHER" id="PTHR11138">
    <property type="entry name" value="METHIONYL-TRNA FORMYLTRANSFERASE"/>
    <property type="match status" value="1"/>
</dbReference>
<dbReference type="PANTHER" id="PTHR11138:SF5">
    <property type="entry name" value="METHIONYL-TRNA FORMYLTRANSFERASE, MITOCHONDRIAL"/>
    <property type="match status" value="1"/>
</dbReference>
<dbReference type="Pfam" id="PF02911">
    <property type="entry name" value="Formyl_trans_C"/>
    <property type="match status" value="1"/>
</dbReference>
<dbReference type="Pfam" id="PF00551">
    <property type="entry name" value="Formyl_trans_N"/>
    <property type="match status" value="1"/>
</dbReference>
<dbReference type="SUPFAM" id="SSF50486">
    <property type="entry name" value="FMT C-terminal domain-like"/>
    <property type="match status" value="1"/>
</dbReference>
<dbReference type="SUPFAM" id="SSF53328">
    <property type="entry name" value="Formyltransferase"/>
    <property type="match status" value="1"/>
</dbReference>
<feature type="chain" id="PRO_0000082904" description="Methionyl-tRNA formyltransferase">
    <location>
        <begin position="1"/>
        <end position="319"/>
    </location>
</feature>
<feature type="binding site" evidence="1">
    <location>
        <begin position="114"/>
        <end position="117"/>
    </location>
    <ligand>
        <name>(6S)-5,6,7,8-tetrahydrofolate</name>
        <dbReference type="ChEBI" id="CHEBI:57453"/>
    </ligand>
</feature>
<comment type="function">
    <text evidence="1">Attaches a formyl group to the free amino group of methionyl-tRNA(fMet). The formyl group appears to play a dual role in the initiator identity of N-formylmethionyl-tRNA by promoting its recognition by IF2 and preventing the misappropriation of this tRNA by the elongation apparatus.</text>
</comment>
<comment type="catalytic activity">
    <reaction evidence="1">
        <text>L-methionyl-tRNA(fMet) + (6R)-10-formyltetrahydrofolate = N-formyl-L-methionyl-tRNA(fMet) + (6S)-5,6,7,8-tetrahydrofolate + H(+)</text>
        <dbReference type="Rhea" id="RHEA:24380"/>
        <dbReference type="Rhea" id="RHEA-COMP:9952"/>
        <dbReference type="Rhea" id="RHEA-COMP:9953"/>
        <dbReference type="ChEBI" id="CHEBI:15378"/>
        <dbReference type="ChEBI" id="CHEBI:57453"/>
        <dbReference type="ChEBI" id="CHEBI:78530"/>
        <dbReference type="ChEBI" id="CHEBI:78844"/>
        <dbReference type="ChEBI" id="CHEBI:195366"/>
        <dbReference type="EC" id="2.1.2.9"/>
    </reaction>
</comment>
<comment type="similarity">
    <text evidence="1">Belongs to the Fmt family.</text>
</comment>
<keyword id="KW-0648">Protein biosynthesis</keyword>
<keyword id="KW-0808">Transferase</keyword>
<gene>
    <name evidence="1" type="primary">fmt</name>
    <name type="ordered locus">ACIAD3637</name>
</gene>
<organism>
    <name type="scientific">Acinetobacter baylyi (strain ATCC 33305 / BD413 / ADP1)</name>
    <dbReference type="NCBI Taxonomy" id="62977"/>
    <lineage>
        <taxon>Bacteria</taxon>
        <taxon>Pseudomonadati</taxon>
        <taxon>Pseudomonadota</taxon>
        <taxon>Gammaproteobacteria</taxon>
        <taxon>Moraxellales</taxon>
        <taxon>Moraxellaceae</taxon>
        <taxon>Acinetobacter</taxon>
    </lineage>
</organism>
<sequence length="319" mass="34511">MKIIFAGTPDFAATALDALIKTPHDIVAVYTQPDRKAGRGQKLTPSPVKQLALEHNLPVLQPLHFKSSTEEGLAAQAELAAFNADVMVVAAYGLILPQIVLDTPKYGCLNIHGSLLPRWRGAAPIQRAIAAGDAETGVTIMKMAAGLDTGDMMFKTYCPIEASDTSASLYEKLAAQGAEAICTVLECEQQLQKFLAEREVQDENQTVYAHKLVKAEAQIDWTQDAIQIDRNIRAFNPWPVAFIPLDDKNNLRVWESTVSKLIAPDAEAGKIIAMDKHGIHVACGTGVVCLTALQWPGGKALNPVQIIQTQKLNIGQVLA</sequence>
<reference key="1">
    <citation type="journal article" date="2004" name="Nucleic Acids Res.">
        <title>Unique features revealed by the genome sequence of Acinetobacter sp. ADP1, a versatile and naturally transformation competent bacterium.</title>
        <authorList>
            <person name="Barbe V."/>
            <person name="Vallenet D."/>
            <person name="Fonknechten N."/>
            <person name="Kreimeyer A."/>
            <person name="Oztas S."/>
            <person name="Labarre L."/>
            <person name="Cruveiller S."/>
            <person name="Robert C."/>
            <person name="Duprat S."/>
            <person name="Wincker P."/>
            <person name="Ornston L.N."/>
            <person name="Weissenbach J."/>
            <person name="Marliere P."/>
            <person name="Cohen G.N."/>
            <person name="Medigue C."/>
        </authorList>
    </citation>
    <scope>NUCLEOTIDE SEQUENCE [LARGE SCALE GENOMIC DNA]</scope>
    <source>
        <strain>ATCC 33305 / BD413 / ADP1</strain>
    </source>
</reference>
<evidence type="ECO:0000255" key="1">
    <source>
        <dbReference type="HAMAP-Rule" id="MF_00182"/>
    </source>
</evidence>
<name>FMT_ACIAD</name>
<protein>
    <recommendedName>
        <fullName evidence="1">Methionyl-tRNA formyltransferase</fullName>
        <ecNumber evidence="1">2.1.2.9</ecNumber>
    </recommendedName>
</protein>